<gene>
    <name evidence="1" type="primary">mutS</name>
    <name type="ordered locus">Rsph17025_2655</name>
</gene>
<proteinExistence type="inferred from homology"/>
<protein>
    <recommendedName>
        <fullName evidence="1">DNA mismatch repair protein MutS</fullName>
    </recommendedName>
</protein>
<comment type="function">
    <text evidence="1">This protein is involved in the repair of mismatches in DNA. It is possible that it carries out the mismatch recognition step. This protein has a weak ATPase activity.</text>
</comment>
<comment type="similarity">
    <text evidence="1">Belongs to the DNA mismatch repair MutS family.</text>
</comment>
<accession>A4WVX8</accession>
<feature type="chain" id="PRO_1000008084" description="DNA mismatch repair protein MutS">
    <location>
        <begin position="1"/>
        <end position="876"/>
    </location>
</feature>
<feature type="region of interest" description="Disordered" evidence="2">
    <location>
        <begin position="829"/>
        <end position="856"/>
    </location>
</feature>
<feature type="compositionally biased region" description="Pro residues" evidence="2">
    <location>
        <begin position="832"/>
        <end position="841"/>
    </location>
</feature>
<feature type="binding site" evidence="1">
    <location>
        <begin position="626"/>
        <end position="633"/>
    </location>
    <ligand>
        <name>ATP</name>
        <dbReference type="ChEBI" id="CHEBI:30616"/>
    </ligand>
</feature>
<reference key="1">
    <citation type="submission" date="2007-04" db="EMBL/GenBank/DDBJ databases">
        <title>Complete sequence of chromosome of Rhodobacter sphaeroides ATCC 17025.</title>
        <authorList>
            <consortium name="US DOE Joint Genome Institute"/>
            <person name="Copeland A."/>
            <person name="Lucas S."/>
            <person name="Lapidus A."/>
            <person name="Barry K."/>
            <person name="Detter J.C."/>
            <person name="Glavina del Rio T."/>
            <person name="Hammon N."/>
            <person name="Israni S."/>
            <person name="Dalin E."/>
            <person name="Tice H."/>
            <person name="Pitluck S."/>
            <person name="Chertkov O."/>
            <person name="Brettin T."/>
            <person name="Bruce D."/>
            <person name="Han C."/>
            <person name="Schmutz J."/>
            <person name="Larimer F."/>
            <person name="Land M."/>
            <person name="Hauser L."/>
            <person name="Kyrpides N."/>
            <person name="Kim E."/>
            <person name="Richardson P."/>
            <person name="Mackenzie C."/>
            <person name="Choudhary M."/>
            <person name="Donohue T.J."/>
            <person name="Kaplan S."/>
        </authorList>
    </citation>
    <scope>NUCLEOTIDE SEQUENCE [LARGE SCALE GENOMIC DNA]</scope>
    <source>
        <strain>ATCC 17025 / ATH 2.4.3</strain>
    </source>
</reference>
<dbReference type="EMBL" id="CP000661">
    <property type="protein sequence ID" value="ABP71542.1"/>
    <property type="molecule type" value="Genomic_DNA"/>
</dbReference>
<dbReference type="SMR" id="A4WVX8"/>
<dbReference type="STRING" id="349102.Rsph17025_2655"/>
<dbReference type="KEGG" id="rsq:Rsph17025_2655"/>
<dbReference type="eggNOG" id="COG0249">
    <property type="taxonomic scope" value="Bacteria"/>
</dbReference>
<dbReference type="HOGENOM" id="CLU_002472_4_0_5"/>
<dbReference type="BioCyc" id="RSPH349102:G1G8M-2735-MONOMER"/>
<dbReference type="GO" id="GO:0005829">
    <property type="term" value="C:cytosol"/>
    <property type="evidence" value="ECO:0007669"/>
    <property type="project" value="TreeGrafter"/>
</dbReference>
<dbReference type="GO" id="GO:0005524">
    <property type="term" value="F:ATP binding"/>
    <property type="evidence" value="ECO:0007669"/>
    <property type="project" value="UniProtKB-UniRule"/>
</dbReference>
<dbReference type="GO" id="GO:0140664">
    <property type="term" value="F:ATP-dependent DNA damage sensor activity"/>
    <property type="evidence" value="ECO:0007669"/>
    <property type="project" value="InterPro"/>
</dbReference>
<dbReference type="GO" id="GO:0003684">
    <property type="term" value="F:damaged DNA binding"/>
    <property type="evidence" value="ECO:0007669"/>
    <property type="project" value="UniProtKB-UniRule"/>
</dbReference>
<dbReference type="GO" id="GO:0030983">
    <property type="term" value="F:mismatched DNA binding"/>
    <property type="evidence" value="ECO:0007669"/>
    <property type="project" value="InterPro"/>
</dbReference>
<dbReference type="GO" id="GO:0006298">
    <property type="term" value="P:mismatch repair"/>
    <property type="evidence" value="ECO:0007669"/>
    <property type="project" value="UniProtKB-UniRule"/>
</dbReference>
<dbReference type="CDD" id="cd03284">
    <property type="entry name" value="ABC_MutS1"/>
    <property type="match status" value="1"/>
</dbReference>
<dbReference type="FunFam" id="3.40.1170.10:FF:000001">
    <property type="entry name" value="DNA mismatch repair protein MutS"/>
    <property type="match status" value="1"/>
</dbReference>
<dbReference type="Gene3D" id="1.10.1420.10">
    <property type="match status" value="2"/>
</dbReference>
<dbReference type="Gene3D" id="6.10.140.430">
    <property type="match status" value="1"/>
</dbReference>
<dbReference type="Gene3D" id="3.40.1170.10">
    <property type="entry name" value="DNA repair protein MutS, domain I"/>
    <property type="match status" value="1"/>
</dbReference>
<dbReference type="Gene3D" id="3.30.420.110">
    <property type="entry name" value="MutS, connector domain"/>
    <property type="match status" value="1"/>
</dbReference>
<dbReference type="Gene3D" id="3.40.50.300">
    <property type="entry name" value="P-loop containing nucleotide triphosphate hydrolases"/>
    <property type="match status" value="1"/>
</dbReference>
<dbReference type="HAMAP" id="MF_00096">
    <property type="entry name" value="MutS"/>
    <property type="match status" value="1"/>
</dbReference>
<dbReference type="InterPro" id="IPR005748">
    <property type="entry name" value="DNA_mismatch_repair_MutS"/>
</dbReference>
<dbReference type="InterPro" id="IPR007695">
    <property type="entry name" value="DNA_mismatch_repair_MutS-lik_N"/>
</dbReference>
<dbReference type="InterPro" id="IPR017261">
    <property type="entry name" value="DNA_mismatch_repair_MutS/MSH"/>
</dbReference>
<dbReference type="InterPro" id="IPR000432">
    <property type="entry name" value="DNA_mismatch_repair_MutS_C"/>
</dbReference>
<dbReference type="InterPro" id="IPR007861">
    <property type="entry name" value="DNA_mismatch_repair_MutS_clamp"/>
</dbReference>
<dbReference type="InterPro" id="IPR007696">
    <property type="entry name" value="DNA_mismatch_repair_MutS_core"/>
</dbReference>
<dbReference type="InterPro" id="IPR016151">
    <property type="entry name" value="DNA_mismatch_repair_MutS_N"/>
</dbReference>
<dbReference type="InterPro" id="IPR036187">
    <property type="entry name" value="DNA_mismatch_repair_MutS_sf"/>
</dbReference>
<dbReference type="InterPro" id="IPR007860">
    <property type="entry name" value="DNA_mmatch_repair_MutS_con_dom"/>
</dbReference>
<dbReference type="InterPro" id="IPR045076">
    <property type="entry name" value="MutS"/>
</dbReference>
<dbReference type="InterPro" id="IPR036678">
    <property type="entry name" value="MutS_con_dom_sf"/>
</dbReference>
<dbReference type="InterPro" id="IPR027417">
    <property type="entry name" value="P-loop_NTPase"/>
</dbReference>
<dbReference type="NCBIfam" id="TIGR01070">
    <property type="entry name" value="mutS1"/>
    <property type="match status" value="1"/>
</dbReference>
<dbReference type="NCBIfam" id="NF003810">
    <property type="entry name" value="PRK05399.1"/>
    <property type="match status" value="1"/>
</dbReference>
<dbReference type="PANTHER" id="PTHR11361:SF34">
    <property type="entry name" value="DNA MISMATCH REPAIR PROTEIN MSH1, MITOCHONDRIAL"/>
    <property type="match status" value="1"/>
</dbReference>
<dbReference type="PANTHER" id="PTHR11361">
    <property type="entry name" value="DNA MISMATCH REPAIR PROTEIN MUTS FAMILY MEMBER"/>
    <property type="match status" value="1"/>
</dbReference>
<dbReference type="Pfam" id="PF01624">
    <property type="entry name" value="MutS_I"/>
    <property type="match status" value="1"/>
</dbReference>
<dbReference type="Pfam" id="PF05188">
    <property type="entry name" value="MutS_II"/>
    <property type="match status" value="1"/>
</dbReference>
<dbReference type="Pfam" id="PF05192">
    <property type="entry name" value="MutS_III"/>
    <property type="match status" value="1"/>
</dbReference>
<dbReference type="Pfam" id="PF05190">
    <property type="entry name" value="MutS_IV"/>
    <property type="match status" value="1"/>
</dbReference>
<dbReference type="Pfam" id="PF00488">
    <property type="entry name" value="MutS_V"/>
    <property type="match status" value="1"/>
</dbReference>
<dbReference type="PIRSF" id="PIRSF037677">
    <property type="entry name" value="DNA_mis_repair_Msh6"/>
    <property type="match status" value="1"/>
</dbReference>
<dbReference type="SMART" id="SM00534">
    <property type="entry name" value="MUTSac"/>
    <property type="match status" value="1"/>
</dbReference>
<dbReference type="SMART" id="SM00533">
    <property type="entry name" value="MUTSd"/>
    <property type="match status" value="1"/>
</dbReference>
<dbReference type="SUPFAM" id="SSF55271">
    <property type="entry name" value="DNA repair protein MutS, domain I"/>
    <property type="match status" value="1"/>
</dbReference>
<dbReference type="SUPFAM" id="SSF53150">
    <property type="entry name" value="DNA repair protein MutS, domain II"/>
    <property type="match status" value="1"/>
</dbReference>
<dbReference type="SUPFAM" id="SSF48334">
    <property type="entry name" value="DNA repair protein MutS, domain III"/>
    <property type="match status" value="1"/>
</dbReference>
<dbReference type="SUPFAM" id="SSF52540">
    <property type="entry name" value="P-loop containing nucleoside triphosphate hydrolases"/>
    <property type="match status" value="1"/>
</dbReference>
<dbReference type="PROSITE" id="PS00486">
    <property type="entry name" value="DNA_MISMATCH_REPAIR_2"/>
    <property type="match status" value="1"/>
</dbReference>
<sequence length="876" mass="95485">MSDDTVTPMMAQYLEIKAQHPGAILFYRMGDFYEMFFEDAALAAEALDIALTKRGKHKGEDIAMCGVPIHAAEGYLLTLIRKGFRVAIAEQMEDPAEAKKRGSKSVVRREVVRLVTPGTLTEDSLLEARRHNFLCAFAEIRDEAALAWADISTGEFSVTPCPLPRLLPELARLAPRELLVADERPLDWIEEVGCALTPLARASFDSASAEKRLCTLFGVGTLDSFGNFTRPELSAMGALVDYLDLTQRGKLPLLRPPVREVAGGTVQIDAATRRNLEITQALTGGREGSLLSAVDRTVTAPGARLLERRLSSPSRDLGLIHDRLAAVSWLTDEPRLREDLRASLRRVPDMDRALSRLALDRAGPRDMAAIRAGLTQAEAIAGRMPADAPSLLAETLEALRGHENLVDLLDQALVAEPPLLVRDGGFIAPGFDDDLDETRRLRDEGRGVIASMQAGFIETTGIQSLKIKHNNVLGYFIEVTSTHAEKMLSPPLSESFIHRQTTAGQVRFTTVALSELETRILNAGNRALELEKMHFAALRTAILDQAGAIGRAARALAEVDLIAAFADLAVAEDWTEPQVDDSRAFAIEAGRHPVVERALRRTGTPFVANDCDLSKAETPAVWLITGPNMAGKSTFLRQNALIALLAQAGSFVPARRAHIGLVSQIFSRVGASDDLARGRSTFMVEMVETAAILNQADDRALVILDEIGRGTATWDGLSIAWATLEHLHDTNRCRALFATHYHEMTALAGKLTGVENATVSVKEWQGEVIFLHEVRRGAADRSYGVQVARLAGLPASVIERARTVLDALESGERESGPRRQALIDDLPLFRAAPPPPAPAAPPKASQVEERLRAIQPDDLSPREALKLLYDLRALLP</sequence>
<keyword id="KW-0067">ATP-binding</keyword>
<keyword id="KW-0227">DNA damage</keyword>
<keyword id="KW-0234">DNA repair</keyword>
<keyword id="KW-0238">DNA-binding</keyword>
<keyword id="KW-0547">Nucleotide-binding</keyword>
<evidence type="ECO:0000255" key="1">
    <source>
        <dbReference type="HAMAP-Rule" id="MF_00096"/>
    </source>
</evidence>
<evidence type="ECO:0000256" key="2">
    <source>
        <dbReference type="SAM" id="MobiDB-lite"/>
    </source>
</evidence>
<name>MUTS_CERS5</name>
<organism>
    <name type="scientific">Cereibacter sphaeroides (strain ATCC 17025 / ATH 2.4.3)</name>
    <name type="common">Rhodobacter sphaeroides</name>
    <dbReference type="NCBI Taxonomy" id="349102"/>
    <lineage>
        <taxon>Bacteria</taxon>
        <taxon>Pseudomonadati</taxon>
        <taxon>Pseudomonadota</taxon>
        <taxon>Alphaproteobacteria</taxon>
        <taxon>Rhodobacterales</taxon>
        <taxon>Paracoccaceae</taxon>
        <taxon>Cereibacter</taxon>
    </lineage>
</organism>